<gene>
    <name evidence="1" type="primary">adk</name>
    <name type="ordered locus">VFMJ11_0830</name>
</gene>
<keyword id="KW-0067">ATP-binding</keyword>
<keyword id="KW-0963">Cytoplasm</keyword>
<keyword id="KW-0418">Kinase</keyword>
<keyword id="KW-0545">Nucleotide biosynthesis</keyword>
<keyword id="KW-0547">Nucleotide-binding</keyword>
<keyword id="KW-0808">Transferase</keyword>
<sequence length="214" mass="23317">MRIILLGAPGAGKGTQAQFIMDKYGIPQISTGDMLRAAIKAGTELGKQAKSVIDAGQLVSDEIILGLVKERIAQEDCAKGFLLDGFPRTIPQADGLKENGVSIDYVLEFDVADEVIVERMSGRRAHLPSGRTYHVVYNPPKEEGKDDETGEPLVIREDDKPETVLARLGIYHEQTAPLIAYYNKEAEAGNTKYLKFDGTKLVAEVSAEIEKALA</sequence>
<feature type="chain" id="PRO_1000100625" description="Adenylate kinase">
    <location>
        <begin position="1"/>
        <end position="214"/>
    </location>
</feature>
<feature type="region of interest" description="NMP" evidence="1">
    <location>
        <begin position="30"/>
        <end position="59"/>
    </location>
</feature>
<feature type="region of interest" description="LID" evidence="1">
    <location>
        <begin position="122"/>
        <end position="159"/>
    </location>
</feature>
<feature type="binding site" evidence="1">
    <location>
        <begin position="10"/>
        <end position="15"/>
    </location>
    <ligand>
        <name>ATP</name>
        <dbReference type="ChEBI" id="CHEBI:30616"/>
    </ligand>
</feature>
<feature type="binding site" evidence="1">
    <location>
        <position position="31"/>
    </location>
    <ligand>
        <name>AMP</name>
        <dbReference type="ChEBI" id="CHEBI:456215"/>
    </ligand>
</feature>
<feature type="binding site" evidence="1">
    <location>
        <position position="36"/>
    </location>
    <ligand>
        <name>AMP</name>
        <dbReference type="ChEBI" id="CHEBI:456215"/>
    </ligand>
</feature>
<feature type="binding site" evidence="1">
    <location>
        <begin position="57"/>
        <end position="59"/>
    </location>
    <ligand>
        <name>AMP</name>
        <dbReference type="ChEBI" id="CHEBI:456215"/>
    </ligand>
</feature>
<feature type="binding site" evidence="1">
    <location>
        <begin position="85"/>
        <end position="88"/>
    </location>
    <ligand>
        <name>AMP</name>
        <dbReference type="ChEBI" id="CHEBI:456215"/>
    </ligand>
</feature>
<feature type="binding site" evidence="1">
    <location>
        <position position="92"/>
    </location>
    <ligand>
        <name>AMP</name>
        <dbReference type="ChEBI" id="CHEBI:456215"/>
    </ligand>
</feature>
<feature type="binding site" evidence="1">
    <location>
        <position position="123"/>
    </location>
    <ligand>
        <name>ATP</name>
        <dbReference type="ChEBI" id="CHEBI:30616"/>
    </ligand>
</feature>
<feature type="binding site" evidence="1">
    <location>
        <begin position="132"/>
        <end position="133"/>
    </location>
    <ligand>
        <name>ATP</name>
        <dbReference type="ChEBI" id="CHEBI:30616"/>
    </ligand>
</feature>
<feature type="binding site" evidence="1">
    <location>
        <position position="156"/>
    </location>
    <ligand>
        <name>AMP</name>
        <dbReference type="ChEBI" id="CHEBI:456215"/>
    </ligand>
</feature>
<feature type="binding site" evidence="1">
    <location>
        <position position="167"/>
    </location>
    <ligand>
        <name>AMP</name>
        <dbReference type="ChEBI" id="CHEBI:456215"/>
    </ligand>
</feature>
<feature type="binding site" evidence="1">
    <location>
        <position position="200"/>
    </location>
    <ligand>
        <name>ATP</name>
        <dbReference type="ChEBI" id="CHEBI:30616"/>
    </ligand>
</feature>
<evidence type="ECO:0000255" key="1">
    <source>
        <dbReference type="HAMAP-Rule" id="MF_00235"/>
    </source>
</evidence>
<dbReference type="EC" id="2.7.4.3" evidence="1"/>
<dbReference type="EMBL" id="CP001139">
    <property type="protein sequence ID" value="ACH65358.1"/>
    <property type="molecule type" value="Genomic_DNA"/>
</dbReference>
<dbReference type="RefSeq" id="WP_005418249.1">
    <property type="nucleotide sequence ID" value="NC_011184.1"/>
</dbReference>
<dbReference type="SMR" id="B5FBZ5"/>
<dbReference type="GeneID" id="54163461"/>
<dbReference type="KEGG" id="vfm:VFMJ11_0830"/>
<dbReference type="HOGENOM" id="CLU_032354_1_2_6"/>
<dbReference type="UniPathway" id="UPA00588">
    <property type="reaction ID" value="UER00649"/>
</dbReference>
<dbReference type="Proteomes" id="UP000001857">
    <property type="component" value="Chromosome I"/>
</dbReference>
<dbReference type="GO" id="GO:0005737">
    <property type="term" value="C:cytoplasm"/>
    <property type="evidence" value="ECO:0007669"/>
    <property type="project" value="UniProtKB-SubCell"/>
</dbReference>
<dbReference type="GO" id="GO:0004017">
    <property type="term" value="F:adenylate kinase activity"/>
    <property type="evidence" value="ECO:0007669"/>
    <property type="project" value="UniProtKB-UniRule"/>
</dbReference>
<dbReference type="GO" id="GO:0005524">
    <property type="term" value="F:ATP binding"/>
    <property type="evidence" value="ECO:0007669"/>
    <property type="project" value="UniProtKB-UniRule"/>
</dbReference>
<dbReference type="GO" id="GO:0044209">
    <property type="term" value="P:AMP salvage"/>
    <property type="evidence" value="ECO:0007669"/>
    <property type="project" value="UniProtKB-UniRule"/>
</dbReference>
<dbReference type="CDD" id="cd01428">
    <property type="entry name" value="ADK"/>
    <property type="match status" value="1"/>
</dbReference>
<dbReference type="FunFam" id="3.40.50.300:FF:000106">
    <property type="entry name" value="Adenylate kinase mitochondrial"/>
    <property type="match status" value="1"/>
</dbReference>
<dbReference type="Gene3D" id="3.40.50.300">
    <property type="entry name" value="P-loop containing nucleotide triphosphate hydrolases"/>
    <property type="match status" value="1"/>
</dbReference>
<dbReference type="HAMAP" id="MF_00235">
    <property type="entry name" value="Adenylate_kinase_Adk"/>
    <property type="match status" value="1"/>
</dbReference>
<dbReference type="InterPro" id="IPR006259">
    <property type="entry name" value="Adenyl_kin_sub"/>
</dbReference>
<dbReference type="InterPro" id="IPR000850">
    <property type="entry name" value="Adenylat/UMP-CMP_kin"/>
</dbReference>
<dbReference type="InterPro" id="IPR033690">
    <property type="entry name" value="Adenylat_kinase_CS"/>
</dbReference>
<dbReference type="InterPro" id="IPR007862">
    <property type="entry name" value="Adenylate_kinase_lid-dom"/>
</dbReference>
<dbReference type="InterPro" id="IPR027417">
    <property type="entry name" value="P-loop_NTPase"/>
</dbReference>
<dbReference type="NCBIfam" id="TIGR01351">
    <property type="entry name" value="adk"/>
    <property type="match status" value="1"/>
</dbReference>
<dbReference type="NCBIfam" id="NF001379">
    <property type="entry name" value="PRK00279.1-1"/>
    <property type="match status" value="1"/>
</dbReference>
<dbReference type="NCBIfam" id="NF001380">
    <property type="entry name" value="PRK00279.1-2"/>
    <property type="match status" value="1"/>
</dbReference>
<dbReference type="NCBIfam" id="NF001381">
    <property type="entry name" value="PRK00279.1-3"/>
    <property type="match status" value="1"/>
</dbReference>
<dbReference type="PANTHER" id="PTHR23359">
    <property type="entry name" value="NUCLEOTIDE KINASE"/>
    <property type="match status" value="1"/>
</dbReference>
<dbReference type="Pfam" id="PF00406">
    <property type="entry name" value="ADK"/>
    <property type="match status" value="1"/>
</dbReference>
<dbReference type="Pfam" id="PF05191">
    <property type="entry name" value="ADK_lid"/>
    <property type="match status" value="1"/>
</dbReference>
<dbReference type="PRINTS" id="PR00094">
    <property type="entry name" value="ADENYLTKNASE"/>
</dbReference>
<dbReference type="SUPFAM" id="SSF52540">
    <property type="entry name" value="P-loop containing nucleoside triphosphate hydrolases"/>
    <property type="match status" value="1"/>
</dbReference>
<dbReference type="PROSITE" id="PS00113">
    <property type="entry name" value="ADENYLATE_KINASE"/>
    <property type="match status" value="1"/>
</dbReference>
<reference key="1">
    <citation type="submission" date="2008-08" db="EMBL/GenBank/DDBJ databases">
        <title>Complete sequence of Vibrio fischeri strain MJ11.</title>
        <authorList>
            <person name="Mandel M.J."/>
            <person name="Stabb E.V."/>
            <person name="Ruby E.G."/>
            <person name="Ferriera S."/>
            <person name="Johnson J."/>
            <person name="Kravitz S."/>
            <person name="Beeson K."/>
            <person name="Sutton G."/>
            <person name="Rogers Y.-H."/>
            <person name="Friedman R."/>
            <person name="Frazier M."/>
            <person name="Venter J.C."/>
        </authorList>
    </citation>
    <scope>NUCLEOTIDE SEQUENCE [LARGE SCALE GENOMIC DNA]</scope>
    <source>
        <strain>MJ11</strain>
    </source>
</reference>
<comment type="function">
    <text evidence="1">Catalyzes the reversible transfer of the terminal phosphate group between ATP and AMP. Plays an important role in cellular energy homeostasis and in adenine nucleotide metabolism.</text>
</comment>
<comment type="catalytic activity">
    <reaction evidence="1">
        <text>AMP + ATP = 2 ADP</text>
        <dbReference type="Rhea" id="RHEA:12973"/>
        <dbReference type="ChEBI" id="CHEBI:30616"/>
        <dbReference type="ChEBI" id="CHEBI:456215"/>
        <dbReference type="ChEBI" id="CHEBI:456216"/>
        <dbReference type="EC" id="2.7.4.3"/>
    </reaction>
</comment>
<comment type="pathway">
    <text evidence="1">Purine metabolism; AMP biosynthesis via salvage pathway; AMP from ADP: step 1/1.</text>
</comment>
<comment type="subunit">
    <text evidence="1">Monomer.</text>
</comment>
<comment type="subcellular location">
    <subcellularLocation>
        <location evidence="1">Cytoplasm</location>
    </subcellularLocation>
</comment>
<comment type="domain">
    <text evidence="1">Consists of three domains, a large central CORE domain and two small peripheral domains, NMPbind and LID, which undergo movements during catalysis. The LID domain closes over the site of phosphoryl transfer upon ATP binding. Assembling and dissambling the active center during each catalytic cycle provides an effective means to prevent ATP hydrolysis.</text>
</comment>
<comment type="similarity">
    <text evidence="1">Belongs to the adenylate kinase family.</text>
</comment>
<protein>
    <recommendedName>
        <fullName evidence="1">Adenylate kinase</fullName>
        <shortName evidence="1">AK</shortName>
        <ecNumber evidence="1">2.7.4.3</ecNumber>
    </recommendedName>
    <alternativeName>
        <fullName evidence="1">ATP-AMP transphosphorylase</fullName>
    </alternativeName>
    <alternativeName>
        <fullName evidence="1">ATP:AMP phosphotransferase</fullName>
    </alternativeName>
    <alternativeName>
        <fullName evidence="1">Adenylate monophosphate kinase</fullName>
    </alternativeName>
</protein>
<organism>
    <name type="scientific">Aliivibrio fischeri (strain MJ11)</name>
    <name type="common">Vibrio fischeri</name>
    <dbReference type="NCBI Taxonomy" id="388396"/>
    <lineage>
        <taxon>Bacteria</taxon>
        <taxon>Pseudomonadati</taxon>
        <taxon>Pseudomonadota</taxon>
        <taxon>Gammaproteobacteria</taxon>
        <taxon>Vibrionales</taxon>
        <taxon>Vibrionaceae</taxon>
        <taxon>Aliivibrio</taxon>
    </lineage>
</organism>
<accession>B5FBZ5</accession>
<proteinExistence type="inferred from homology"/>
<name>KAD_ALIFM</name>